<accession>P75122</accession>
<evidence type="ECO:0000255" key="1">
    <source>
        <dbReference type="HAMAP-Rule" id="MF_02006"/>
    </source>
</evidence>
<protein>
    <recommendedName>
        <fullName evidence="1">Tyrosine--tRNA ligase</fullName>
        <ecNumber evidence="1">6.1.1.1</ecNumber>
    </recommendedName>
    <alternativeName>
        <fullName evidence="1">Tyrosyl-tRNA synthetase</fullName>
        <shortName evidence="1">TyrRS</shortName>
    </alternativeName>
</protein>
<sequence>MTKDLLALLKERGLFVQANFEKELKQLLNQGSFAFYVGFDPTAPSLHIGNYVLLHVAQIFQAMGHIPHVLLGSGTALIGDPTGRMELRQMMSRETIAENTRNIKKQIRRFLGSNVVFCQNETWLKKLNYIEVIRELGPCFSVNKMLATDAFSARWERGLTLMELNYMVLQAYDFYYLNQKYGVQLQIGGSDQWANILAGADLIRRKTQKQVYGMTTNLLVKANGEKMGKSASGALWLDPQKTSPYDFYQYWINLDDASLQKVFLMLTKLDTKAIETLCNLKGAAIKEAKAKLAFELTDAIHGTKAALVAQAKSARIFAFQPDTETKTVRAGTRLVDVIVDLGLVVSRSEARRVIQQGGLTINQEKVTDVEMVLQASSQPLVIGKGKKRFVTVQVIANTK</sequence>
<organism>
    <name type="scientific">Mycoplasma pneumoniae (strain ATCC 29342 / M129 / Subtype 1)</name>
    <name type="common">Mycoplasmoides pneumoniae</name>
    <dbReference type="NCBI Taxonomy" id="272634"/>
    <lineage>
        <taxon>Bacteria</taxon>
        <taxon>Bacillati</taxon>
        <taxon>Mycoplasmatota</taxon>
        <taxon>Mycoplasmoidales</taxon>
        <taxon>Mycoplasmoidaceae</taxon>
        <taxon>Mycoplasmoides</taxon>
    </lineage>
</organism>
<feature type="chain" id="PRO_0000055658" description="Tyrosine--tRNA ligase">
    <location>
        <begin position="1"/>
        <end position="399"/>
    </location>
</feature>
<feature type="domain" description="S4 RNA-binding" evidence="1">
    <location>
        <begin position="332"/>
        <end position="395"/>
    </location>
</feature>
<feature type="short sequence motif" description="'HIGH' region">
    <location>
        <begin position="41"/>
        <end position="50"/>
    </location>
</feature>
<feature type="short sequence motif" description="'KMSKS' region">
    <location>
        <begin position="226"/>
        <end position="230"/>
    </location>
</feature>
<feature type="binding site" evidence="1">
    <location>
        <position position="36"/>
    </location>
    <ligand>
        <name>L-tyrosine</name>
        <dbReference type="ChEBI" id="CHEBI:58315"/>
    </ligand>
</feature>
<feature type="binding site" evidence="1">
    <location>
        <position position="166"/>
    </location>
    <ligand>
        <name>L-tyrosine</name>
        <dbReference type="ChEBI" id="CHEBI:58315"/>
    </ligand>
</feature>
<feature type="binding site" evidence="1">
    <location>
        <position position="170"/>
    </location>
    <ligand>
        <name>L-tyrosine</name>
        <dbReference type="ChEBI" id="CHEBI:58315"/>
    </ligand>
</feature>
<feature type="binding site" evidence="1">
    <location>
        <position position="229"/>
    </location>
    <ligand>
        <name>ATP</name>
        <dbReference type="ChEBI" id="CHEBI:30616"/>
    </ligand>
</feature>
<comment type="function">
    <text evidence="1">Catalyzes the attachment of tyrosine to tRNA(Tyr) in a two-step reaction: tyrosine is first activated by ATP to form Tyr-AMP and then transferred to the acceptor end of tRNA(Tyr).</text>
</comment>
<comment type="catalytic activity">
    <reaction evidence="1">
        <text>tRNA(Tyr) + L-tyrosine + ATP = L-tyrosyl-tRNA(Tyr) + AMP + diphosphate + H(+)</text>
        <dbReference type="Rhea" id="RHEA:10220"/>
        <dbReference type="Rhea" id="RHEA-COMP:9706"/>
        <dbReference type="Rhea" id="RHEA-COMP:9707"/>
        <dbReference type="ChEBI" id="CHEBI:15378"/>
        <dbReference type="ChEBI" id="CHEBI:30616"/>
        <dbReference type="ChEBI" id="CHEBI:33019"/>
        <dbReference type="ChEBI" id="CHEBI:58315"/>
        <dbReference type="ChEBI" id="CHEBI:78442"/>
        <dbReference type="ChEBI" id="CHEBI:78536"/>
        <dbReference type="ChEBI" id="CHEBI:456215"/>
        <dbReference type="EC" id="6.1.1.1"/>
    </reaction>
</comment>
<comment type="subunit">
    <text evidence="1">Homodimer.</text>
</comment>
<comment type="subcellular location">
    <subcellularLocation>
        <location evidence="1">Cytoplasm</location>
    </subcellularLocation>
</comment>
<comment type="similarity">
    <text evidence="1">Belongs to the class-I aminoacyl-tRNA synthetase family. TyrS type 1 subfamily.</text>
</comment>
<keyword id="KW-0030">Aminoacyl-tRNA synthetase</keyword>
<keyword id="KW-0067">ATP-binding</keyword>
<keyword id="KW-0963">Cytoplasm</keyword>
<keyword id="KW-0436">Ligase</keyword>
<keyword id="KW-0547">Nucleotide-binding</keyword>
<keyword id="KW-0648">Protein biosynthesis</keyword>
<keyword id="KW-1185">Reference proteome</keyword>
<keyword id="KW-0694">RNA-binding</keyword>
<name>SYY_MYCPN</name>
<proteinExistence type="inferred from homology"/>
<gene>
    <name evidence="1" type="primary">tyrS</name>
    <name type="ordered locus">MPN_669</name>
    <name type="ORF">MP173</name>
</gene>
<reference key="1">
    <citation type="journal article" date="1996" name="Nucleic Acids Res.">
        <title>Complete sequence analysis of the genome of the bacterium Mycoplasma pneumoniae.</title>
        <authorList>
            <person name="Himmelreich R."/>
            <person name="Hilbert H."/>
            <person name="Plagens H."/>
            <person name="Pirkl E."/>
            <person name="Li B.-C."/>
            <person name="Herrmann R."/>
        </authorList>
    </citation>
    <scope>NUCLEOTIDE SEQUENCE [LARGE SCALE GENOMIC DNA]</scope>
    <source>
        <strain>ATCC 29342 / M129 / Subtype 1</strain>
    </source>
</reference>
<dbReference type="EC" id="6.1.1.1" evidence="1"/>
<dbReference type="EMBL" id="U00089">
    <property type="protein sequence ID" value="AAB95821.1"/>
    <property type="molecule type" value="Genomic_DNA"/>
</dbReference>
<dbReference type="PIR" id="S73499">
    <property type="entry name" value="S73499"/>
</dbReference>
<dbReference type="RefSeq" id="NP_110358.1">
    <property type="nucleotide sequence ID" value="NC_000912.1"/>
</dbReference>
<dbReference type="RefSeq" id="WP_010875026.1">
    <property type="nucleotide sequence ID" value="NZ_OU342337.1"/>
</dbReference>
<dbReference type="SMR" id="P75122"/>
<dbReference type="IntAct" id="P75122">
    <property type="interactions" value="1"/>
</dbReference>
<dbReference type="STRING" id="272634.MPN_669"/>
<dbReference type="EnsemblBacteria" id="AAB95821">
    <property type="protein sequence ID" value="AAB95821"/>
    <property type="gene ID" value="MPN_669"/>
</dbReference>
<dbReference type="KEGG" id="mpn:MPN_669"/>
<dbReference type="PATRIC" id="fig|272634.6.peg.734"/>
<dbReference type="HOGENOM" id="CLU_024003_0_3_14"/>
<dbReference type="OrthoDB" id="9804243at2"/>
<dbReference type="BioCyc" id="MPNE272634:G1GJ3-1071-MONOMER"/>
<dbReference type="Proteomes" id="UP000000808">
    <property type="component" value="Chromosome"/>
</dbReference>
<dbReference type="GO" id="GO:0005829">
    <property type="term" value="C:cytosol"/>
    <property type="evidence" value="ECO:0007669"/>
    <property type="project" value="TreeGrafter"/>
</dbReference>
<dbReference type="GO" id="GO:0005524">
    <property type="term" value="F:ATP binding"/>
    <property type="evidence" value="ECO:0007669"/>
    <property type="project" value="UniProtKB-UniRule"/>
</dbReference>
<dbReference type="GO" id="GO:0003723">
    <property type="term" value="F:RNA binding"/>
    <property type="evidence" value="ECO:0007669"/>
    <property type="project" value="UniProtKB-KW"/>
</dbReference>
<dbReference type="GO" id="GO:0004831">
    <property type="term" value="F:tyrosine-tRNA ligase activity"/>
    <property type="evidence" value="ECO:0007669"/>
    <property type="project" value="UniProtKB-UniRule"/>
</dbReference>
<dbReference type="GO" id="GO:0006437">
    <property type="term" value="P:tyrosyl-tRNA aminoacylation"/>
    <property type="evidence" value="ECO:0007669"/>
    <property type="project" value="UniProtKB-UniRule"/>
</dbReference>
<dbReference type="CDD" id="cd00165">
    <property type="entry name" value="S4"/>
    <property type="match status" value="1"/>
</dbReference>
<dbReference type="CDD" id="cd00805">
    <property type="entry name" value="TyrRS_core"/>
    <property type="match status" value="1"/>
</dbReference>
<dbReference type="Gene3D" id="3.40.50.620">
    <property type="entry name" value="HUPs"/>
    <property type="match status" value="1"/>
</dbReference>
<dbReference type="Gene3D" id="3.10.290.10">
    <property type="entry name" value="RNA-binding S4 domain"/>
    <property type="match status" value="1"/>
</dbReference>
<dbReference type="Gene3D" id="1.10.240.10">
    <property type="entry name" value="Tyrosyl-Transfer RNA Synthetase"/>
    <property type="match status" value="1"/>
</dbReference>
<dbReference type="HAMAP" id="MF_02006">
    <property type="entry name" value="Tyr_tRNA_synth_type1"/>
    <property type="match status" value="1"/>
</dbReference>
<dbReference type="InterPro" id="IPR001412">
    <property type="entry name" value="aa-tRNA-synth_I_CS"/>
</dbReference>
<dbReference type="InterPro" id="IPR002305">
    <property type="entry name" value="aa-tRNA-synth_Ic"/>
</dbReference>
<dbReference type="InterPro" id="IPR014729">
    <property type="entry name" value="Rossmann-like_a/b/a_fold"/>
</dbReference>
<dbReference type="InterPro" id="IPR002942">
    <property type="entry name" value="S4_RNA-bd"/>
</dbReference>
<dbReference type="InterPro" id="IPR036986">
    <property type="entry name" value="S4_RNA-bd_sf"/>
</dbReference>
<dbReference type="InterPro" id="IPR054608">
    <property type="entry name" value="SYY-like_C"/>
</dbReference>
<dbReference type="InterPro" id="IPR002307">
    <property type="entry name" value="Tyr-tRNA-ligase"/>
</dbReference>
<dbReference type="InterPro" id="IPR024088">
    <property type="entry name" value="Tyr-tRNA-ligase_bac-type"/>
</dbReference>
<dbReference type="InterPro" id="IPR024107">
    <property type="entry name" value="Tyr-tRNA-ligase_bac_1"/>
</dbReference>
<dbReference type="NCBIfam" id="TIGR00234">
    <property type="entry name" value="tyrS"/>
    <property type="match status" value="1"/>
</dbReference>
<dbReference type="PANTHER" id="PTHR11766:SF0">
    <property type="entry name" value="TYROSINE--TRNA LIGASE, MITOCHONDRIAL"/>
    <property type="match status" value="1"/>
</dbReference>
<dbReference type="PANTHER" id="PTHR11766">
    <property type="entry name" value="TYROSYL-TRNA SYNTHETASE"/>
    <property type="match status" value="1"/>
</dbReference>
<dbReference type="Pfam" id="PF22421">
    <property type="entry name" value="SYY_C-terminal"/>
    <property type="match status" value="1"/>
</dbReference>
<dbReference type="Pfam" id="PF00579">
    <property type="entry name" value="tRNA-synt_1b"/>
    <property type="match status" value="1"/>
</dbReference>
<dbReference type="PRINTS" id="PR01040">
    <property type="entry name" value="TRNASYNTHTYR"/>
</dbReference>
<dbReference type="SMART" id="SM00363">
    <property type="entry name" value="S4"/>
    <property type="match status" value="1"/>
</dbReference>
<dbReference type="SUPFAM" id="SSF55174">
    <property type="entry name" value="Alpha-L RNA-binding motif"/>
    <property type="match status" value="1"/>
</dbReference>
<dbReference type="SUPFAM" id="SSF52374">
    <property type="entry name" value="Nucleotidylyl transferase"/>
    <property type="match status" value="1"/>
</dbReference>
<dbReference type="PROSITE" id="PS00178">
    <property type="entry name" value="AA_TRNA_LIGASE_I"/>
    <property type="match status" value="1"/>
</dbReference>
<dbReference type="PROSITE" id="PS50889">
    <property type="entry name" value="S4"/>
    <property type="match status" value="1"/>
</dbReference>